<reference key="1">
    <citation type="journal article" date="2003" name="Lancet">
        <title>Genome sequence of Vibrio parahaemolyticus: a pathogenic mechanism distinct from that of V. cholerae.</title>
        <authorList>
            <person name="Makino K."/>
            <person name="Oshima K."/>
            <person name="Kurokawa K."/>
            <person name="Yokoyama K."/>
            <person name="Uda T."/>
            <person name="Tagomori K."/>
            <person name="Iijima Y."/>
            <person name="Najima M."/>
            <person name="Nakano M."/>
            <person name="Yamashita A."/>
            <person name="Kubota Y."/>
            <person name="Kimura S."/>
            <person name="Yasunaga T."/>
            <person name="Honda T."/>
            <person name="Shinagawa H."/>
            <person name="Hattori M."/>
            <person name="Iida T."/>
        </authorList>
    </citation>
    <scope>NUCLEOTIDE SEQUENCE [LARGE SCALE GENOMIC DNA]</scope>
    <source>
        <strain>RIMD 2210633</strain>
    </source>
</reference>
<keyword id="KW-0131">Cell cycle</keyword>
<keyword id="KW-0132">Cell division</keyword>
<keyword id="KW-0963">Cytoplasm</keyword>
<keyword id="KW-0238">DNA-binding</keyword>
<protein>
    <recommendedName>
        <fullName evidence="1">Macrodomain Ter protein</fullName>
    </recommendedName>
</protein>
<evidence type="ECO:0000255" key="1">
    <source>
        <dbReference type="HAMAP-Rule" id="MF_01073"/>
    </source>
</evidence>
<dbReference type="EMBL" id="BA000031">
    <property type="protein sequence ID" value="BAC59852.1"/>
    <property type="molecule type" value="Genomic_DNA"/>
</dbReference>
<dbReference type="RefSeq" id="NP_797968.1">
    <property type="nucleotide sequence ID" value="NC_004603.1"/>
</dbReference>
<dbReference type="RefSeq" id="WP_005457449.1">
    <property type="nucleotide sequence ID" value="NC_004603.1"/>
</dbReference>
<dbReference type="SMR" id="Q87PC8"/>
<dbReference type="GeneID" id="1189096"/>
<dbReference type="KEGG" id="vpa:VP1589"/>
<dbReference type="PATRIC" id="fig|223926.6.peg.1515"/>
<dbReference type="eggNOG" id="COG3120">
    <property type="taxonomic scope" value="Bacteria"/>
</dbReference>
<dbReference type="HOGENOM" id="CLU_142157_0_0_6"/>
<dbReference type="Proteomes" id="UP000002493">
    <property type="component" value="Chromosome 1"/>
</dbReference>
<dbReference type="GO" id="GO:0005737">
    <property type="term" value="C:cytoplasm"/>
    <property type="evidence" value="ECO:0007669"/>
    <property type="project" value="UniProtKB-SubCell"/>
</dbReference>
<dbReference type="GO" id="GO:0043565">
    <property type="term" value="F:sequence-specific DNA binding"/>
    <property type="evidence" value="ECO:0007669"/>
    <property type="project" value="UniProtKB-UniRule"/>
</dbReference>
<dbReference type="GO" id="GO:0051301">
    <property type="term" value="P:cell division"/>
    <property type="evidence" value="ECO:0007669"/>
    <property type="project" value="UniProtKB-UniRule"/>
</dbReference>
<dbReference type="GO" id="GO:0006355">
    <property type="term" value="P:regulation of DNA-templated transcription"/>
    <property type="evidence" value="ECO:0007669"/>
    <property type="project" value="InterPro"/>
</dbReference>
<dbReference type="Gene3D" id="1.20.1270.380">
    <property type="entry name" value="MatP, N-terminal domain"/>
    <property type="match status" value="1"/>
</dbReference>
<dbReference type="Gene3D" id="1.10.1220.10">
    <property type="entry name" value="Met repressor-like"/>
    <property type="match status" value="1"/>
</dbReference>
<dbReference type="HAMAP" id="MF_01073">
    <property type="entry name" value="MatP"/>
    <property type="match status" value="1"/>
</dbReference>
<dbReference type="InterPro" id="IPR013321">
    <property type="entry name" value="Arc_rbn_hlx_hlx"/>
</dbReference>
<dbReference type="InterPro" id="IPR009390">
    <property type="entry name" value="MatP"/>
</dbReference>
<dbReference type="InterPro" id="IPR035375">
    <property type="entry name" value="MatP_C"/>
</dbReference>
<dbReference type="InterPro" id="IPR035087">
    <property type="entry name" value="MatP_N"/>
</dbReference>
<dbReference type="InterPro" id="IPR038339">
    <property type="entry name" value="MatP_N_sf"/>
</dbReference>
<dbReference type="NCBIfam" id="NF003471">
    <property type="entry name" value="PRK05097.1"/>
    <property type="match status" value="1"/>
</dbReference>
<dbReference type="Pfam" id="PF06303">
    <property type="entry name" value="MatP"/>
    <property type="match status" value="1"/>
</dbReference>
<dbReference type="Pfam" id="PF17414">
    <property type="entry name" value="MatP_C"/>
    <property type="match status" value="1"/>
</dbReference>
<comment type="function">
    <text evidence="1">Required for spatial organization of the terminus region of the chromosome (Ter macrodomain) during the cell cycle. Prevents early segregation of duplicated Ter macrodomains during cell division. Binds specifically to matS, which is a 13 bp signature motif repeated within the Ter macrodomain.</text>
</comment>
<comment type="subunit">
    <text evidence="1">Homodimer.</text>
</comment>
<comment type="subcellular location">
    <subcellularLocation>
        <location evidence="1">Cytoplasm</location>
    </subcellularLocation>
</comment>
<comment type="similarity">
    <text evidence="1">Belongs to the MatP family.</text>
</comment>
<accession>Q87PC8</accession>
<organism>
    <name type="scientific">Vibrio parahaemolyticus serotype O3:K6 (strain RIMD 2210633)</name>
    <dbReference type="NCBI Taxonomy" id="223926"/>
    <lineage>
        <taxon>Bacteria</taxon>
        <taxon>Pseudomonadati</taxon>
        <taxon>Pseudomonadota</taxon>
        <taxon>Gammaproteobacteria</taxon>
        <taxon>Vibrionales</taxon>
        <taxon>Vibrionaceae</taxon>
        <taxon>Vibrio</taxon>
    </lineage>
</organism>
<feature type="chain" id="PRO_0000070359" description="Macrodomain Ter protein">
    <location>
        <begin position="1"/>
        <end position="149"/>
    </location>
</feature>
<gene>
    <name evidence="1" type="primary">matP</name>
    <name type="ordered locus">VP1589</name>
</gene>
<name>MATP_VIBPA</name>
<proteinExistence type="inferred from homology"/>
<sequence length="149" mass="17468">MKYQQLENLECGWKWKYLIKKWKDGEAITRHIDTSEADAAIAELRRIEHEPTLVLAWIEKHMSEELENKLKQAIRAKRKRHFNAEQVHTKKKSIDLDYRVWEKLSNRANELGCTLSDAIEYLLSEASRSEKASQKVTSIKEDLSKLLSS</sequence>